<reference key="1">
    <citation type="journal article" date="2005" name="Proc. Natl. Acad. Sci. U.S.A.">
        <title>The psychrophilic lifestyle as revealed by the genome sequence of Colwellia psychrerythraea 34H through genomic and proteomic analyses.</title>
        <authorList>
            <person name="Methe B.A."/>
            <person name="Nelson K.E."/>
            <person name="Deming J.W."/>
            <person name="Momen B."/>
            <person name="Melamud E."/>
            <person name="Zhang X."/>
            <person name="Moult J."/>
            <person name="Madupu R."/>
            <person name="Nelson W.C."/>
            <person name="Dodson R.J."/>
            <person name="Brinkac L.M."/>
            <person name="Daugherty S.C."/>
            <person name="Durkin A.S."/>
            <person name="DeBoy R.T."/>
            <person name="Kolonay J.F."/>
            <person name="Sullivan S.A."/>
            <person name="Zhou L."/>
            <person name="Davidsen T.M."/>
            <person name="Wu M."/>
            <person name="Huston A.L."/>
            <person name="Lewis M."/>
            <person name="Weaver B."/>
            <person name="Weidman J.F."/>
            <person name="Khouri H."/>
            <person name="Utterback T.R."/>
            <person name="Feldblyum T.V."/>
            <person name="Fraser C.M."/>
        </authorList>
    </citation>
    <scope>NUCLEOTIDE SEQUENCE [LARGE SCALE GENOMIC DNA]</scope>
    <source>
        <strain>34H / ATCC BAA-681</strain>
    </source>
</reference>
<feature type="chain" id="PRO_0000329217" description="Phosphate acyltransferase">
    <location>
        <begin position="1"/>
        <end position="349"/>
    </location>
</feature>
<accession>Q482K2</accession>
<evidence type="ECO:0000255" key="1">
    <source>
        <dbReference type="HAMAP-Rule" id="MF_00019"/>
    </source>
</evidence>
<gene>
    <name evidence="1" type="primary">plsX</name>
    <name type="ordered locus">CPS_2295</name>
</gene>
<dbReference type="EC" id="2.3.1.274" evidence="1"/>
<dbReference type="EMBL" id="CP000083">
    <property type="protein sequence ID" value="AAZ27525.1"/>
    <property type="molecule type" value="Genomic_DNA"/>
</dbReference>
<dbReference type="RefSeq" id="WP_011043109.1">
    <property type="nucleotide sequence ID" value="NC_003910.7"/>
</dbReference>
<dbReference type="SMR" id="Q482K2"/>
<dbReference type="STRING" id="167879.CPS_2295"/>
<dbReference type="KEGG" id="cps:CPS_2295"/>
<dbReference type="eggNOG" id="COG0416">
    <property type="taxonomic scope" value="Bacteria"/>
</dbReference>
<dbReference type="HOGENOM" id="CLU_039379_1_0_6"/>
<dbReference type="UniPathway" id="UPA00085"/>
<dbReference type="Proteomes" id="UP000000547">
    <property type="component" value="Chromosome"/>
</dbReference>
<dbReference type="GO" id="GO:0005737">
    <property type="term" value="C:cytoplasm"/>
    <property type="evidence" value="ECO:0007669"/>
    <property type="project" value="UniProtKB-SubCell"/>
</dbReference>
<dbReference type="GO" id="GO:0043811">
    <property type="term" value="F:phosphate:acyl-[acyl carrier protein] acyltransferase activity"/>
    <property type="evidence" value="ECO:0007669"/>
    <property type="project" value="UniProtKB-UniRule"/>
</dbReference>
<dbReference type="GO" id="GO:0006633">
    <property type="term" value="P:fatty acid biosynthetic process"/>
    <property type="evidence" value="ECO:0007669"/>
    <property type="project" value="UniProtKB-UniRule"/>
</dbReference>
<dbReference type="GO" id="GO:0008654">
    <property type="term" value="P:phospholipid biosynthetic process"/>
    <property type="evidence" value="ECO:0007669"/>
    <property type="project" value="UniProtKB-KW"/>
</dbReference>
<dbReference type="Gene3D" id="3.40.718.10">
    <property type="entry name" value="Isopropylmalate Dehydrogenase"/>
    <property type="match status" value="1"/>
</dbReference>
<dbReference type="HAMAP" id="MF_00019">
    <property type="entry name" value="PlsX"/>
    <property type="match status" value="1"/>
</dbReference>
<dbReference type="InterPro" id="IPR003664">
    <property type="entry name" value="FA_synthesis"/>
</dbReference>
<dbReference type="InterPro" id="IPR012281">
    <property type="entry name" value="Phospholipid_synth_PlsX-like"/>
</dbReference>
<dbReference type="NCBIfam" id="TIGR00182">
    <property type="entry name" value="plsX"/>
    <property type="match status" value="1"/>
</dbReference>
<dbReference type="PANTHER" id="PTHR30100">
    <property type="entry name" value="FATTY ACID/PHOSPHOLIPID SYNTHESIS PROTEIN PLSX"/>
    <property type="match status" value="1"/>
</dbReference>
<dbReference type="PANTHER" id="PTHR30100:SF1">
    <property type="entry name" value="PHOSPHATE ACYLTRANSFERASE"/>
    <property type="match status" value="1"/>
</dbReference>
<dbReference type="Pfam" id="PF02504">
    <property type="entry name" value="FA_synthesis"/>
    <property type="match status" value="1"/>
</dbReference>
<dbReference type="PIRSF" id="PIRSF002465">
    <property type="entry name" value="Phsphlp_syn_PlsX"/>
    <property type="match status" value="1"/>
</dbReference>
<dbReference type="SUPFAM" id="SSF53659">
    <property type="entry name" value="Isocitrate/Isopropylmalate dehydrogenase-like"/>
    <property type="match status" value="1"/>
</dbReference>
<comment type="function">
    <text evidence="1">Catalyzes the reversible formation of acyl-phosphate (acyl-PO(4)) from acyl-[acyl-carrier-protein] (acyl-ACP). This enzyme utilizes acyl-ACP as fatty acyl donor, but not acyl-CoA.</text>
</comment>
<comment type="catalytic activity">
    <reaction evidence="1">
        <text>a fatty acyl-[ACP] + phosphate = an acyl phosphate + holo-[ACP]</text>
        <dbReference type="Rhea" id="RHEA:42292"/>
        <dbReference type="Rhea" id="RHEA-COMP:9685"/>
        <dbReference type="Rhea" id="RHEA-COMP:14125"/>
        <dbReference type="ChEBI" id="CHEBI:43474"/>
        <dbReference type="ChEBI" id="CHEBI:59918"/>
        <dbReference type="ChEBI" id="CHEBI:64479"/>
        <dbReference type="ChEBI" id="CHEBI:138651"/>
        <dbReference type="EC" id="2.3.1.274"/>
    </reaction>
</comment>
<comment type="pathway">
    <text evidence="1">Lipid metabolism; phospholipid metabolism.</text>
</comment>
<comment type="subunit">
    <text evidence="1">Homodimer. Probably interacts with PlsY.</text>
</comment>
<comment type="subcellular location">
    <subcellularLocation>
        <location evidence="1">Cytoplasm</location>
    </subcellularLocation>
    <text evidence="1">Associated with the membrane possibly through PlsY.</text>
</comment>
<comment type="similarity">
    <text evidence="1">Belongs to the PlsX family.</text>
</comment>
<proteinExistence type="inferred from homology"/>
<organism>
    <name type="scientific">Colwellia psychrerythraea (strain 34H / ATCC BAA-681)</name>
    <name type="common">Vibrio psychroerythus</name>
    <dbReference type="NCBI Taxonomy" id="167879"/>
    <lineage>
        <taxon>Bacteria</taxon>
        <taxon>Pseudomonadati</taxon>
        <taxon>Pseudomonadota</taxon>
        <taxon>Gammaproteobacteria</taxon>
        <taxon>Alteromonadales</taxon>
        <taxon>Colwelliaceae</taxon>
        <taxon>Colwellia</taxon>
    </lineage>
</organism>
<keyword id="KW-0963">Cytoplasm</keyword>
<keyword id="KW-0444">Lipid biosynthesis</keyword>
<keyword id="KW-0443">Lipid metabolism</keyword>
<keyword id="KW-0594">Phospholipid biosynthesis</keyword>
<keyword id="KW-1208">Phospholipid metabolism</keyword>
<keyword id="KW-0808">Transferase</keyword>
<protein>
    <recommendedName>
        <fullName evidence="1">Phosphate acyltransferase</fullName>
        <ecNumber evidence="1">2.3.1.274</ecNumber>
    </recommendedName>
    <alternativeName>
        <fullName evidence="1">Acyl-ACP phosphotransacylase</fullName>
    </alternativeName>
    <alternativeName>
        <fullName evidence="1">Acyl-[acyl-carrier-protein]--phosphate acyltransferase</fullName>
    </alternativeName>
    <alternativeName>
        <fullName evidence="1">Phosphate-acyl-ACP acyltransferase</fullName>
    </alternativeName>
</protein>
<name>PLSX_COLP3</name>
<sequence length="349" mass="37737">MSLNTDLTIALDVMGGDQGPLITISSAITAISHQPNLHLILCGDEIIITETLAHFEITKENLATHKQLSIFPTSQVVLMSDKPIVALRTKKDSSMRKALDLVHEGRAQACVSAGNTGALFSMAHFVLKNIPGVERPALISSLPTHDKDKHVFMLDLGANVFCDSHVLYQFGVMGSVMAEQVDGINKPRVALLNMGEEAIKGSDHIKLAALELTENKDINYVGFIEGSDIFSNKADVIVCDGFVGNVALKTCEGVARLVYEKSKTAFSASLVAKLFGSLLKPSFKKLFKTMNPDQYNGASLIGLRGIVVKSHGNANSSAFLSAIEEAVKEVERQVPEKIKTSLEHGFTCR</sequence>